<keyword id="KW-0002">3D-structure</keyword>
<keyword id="KW-0067">ATP-binding</keyword>
<keyword id="KW-0227">DNA damage</keyword>
<keyword id="KW-0233">DNA recombination</keyword>
<keyword id="KW-0238">DNA-binding</keyword>
<keyword id="KW-0547">Nucleotide-binding</keyword>
<dbReference type="EMBL" id="AF322003">
    <property type="protein sequence ID" value="AAL26913.1"/>
    <property type="molecule type" value="Genomic_DNA"/>
</dbReference>
<dbReference type="PDB" id="3ETL">
    <property type="method" value="X-ray"/>
    <property type="resolution" value="2.40 A"/>
    <property type="chains" value="A=1-322"/>
</dbReference>
<dbReference type="PDB" id="3EW9">
    <property type="method" value="X-ray"/>
    <property type="resolution" value="2.40 A"/>
    <property type="chains" value="A=1-322"/>
</dbReference>
<dbReference type="PDB" id="3EWA">
    <property type="method" value="X-ray"/>
    <property type="resolution" value="2.00 A"/>
    <property type="chains" value="A=1-322"/>
</dbReference>
<dbReference type="PDBsum" id="3ETL"/>
<dbReference type="PDBsum" id="3EW9"/>
<dbReference type="PDBsum" id="3EWA"/>
<dbReference type="SMR" id="P0CW58"/>
<dbReference type="BRENDA" id="3.6.4.B7">
    <property type="organism ID" value="3262"/>
</dbReference>
<dbReference type="EvolutionaryTrace" id="P0CW58"/>
<dbReference type="GO" id="GO:0005524">
    <property type="term" value="F:ATP binding"/>
    <property type="evidence" value="ECO:0007669"/>
    <property type="project" value="UniProtKB-UniRule"/>
</dbReference>
<dbReference type="GO" id="GO:0016887">
    <property type="term" value="F:ATP hydrolysis activity"/>
    <property type="evidence" value="ECO:0007669"/>
    <property type="project" value="InterPro"/>
</dbReference>
<dbReference type="GO" id="GO:0140664">
    <property type="term" value="F:ATP-dependent DNA damage sensor activity"/>
    <property type="evidence" value="ECO:0007669"/>
    <property type="project" value="InterPro"/>
</dbReference>
<dbReference type="GO" id="GO:0003684">
    <property type="term" value="F:damaged DNA binding"/>
    <property type="evidence" value="ECO:0007669"/>
    <property type="project" value="UniProtKB-UniRule"/>
</dbReference>
<dbReference type="GO" id="GO:0006310">
    <property type="term" value="P:DNA recombination"/>
    <property type="evidence" value="ECO:0007669"/>
    <property type="project" value="UniProtKB-UniRule"/>
</dbReference>
<dbReference type="GO" id="GO:0006281">
    <property type="term" value="P:DNA repair"/>
    <property type="evidence" value="ECO:0007669"/>
    <property type="project" value="UniProtKB-UniRule"/>
</dbReference>
<dbReference type="CDD" id="cd19515">
    <property type="entry name" value="archRadA"/>
    <property type="match status" value="1"/>
</dbReference>
<dbReference type="Gene3D" id="1.10.150.20">
    <property type="entry name" value="5' to 3' exonuclease, C-terminal subdomain"/>
    <property type="match status" value="1"/>
</dbReference>
<dbReference type="Gene3D" id="3.40.50.300">
    <property type="entry name" value="P-loop containing nucleotide triphosphate hydrolases"/>
    <property type="match status" value="1"/>
</dbReference>
<dbReference type="HAMAP" id="MF_00348">
    <property type="entry name" value="RadA_arch"/>
    <property type="match status" value="1"/>
</dbReference>
<dbReference type="InterPro" id="IPR003593">
    <property type="entry name" value="AAA+_ATPase"/>
</dbReference>
<dbReference type="InterPro" id="IPR013632">
    <property type="entry name" value="DNA_recomb/repair_Rad51_C"/>
</dbReference>
<dbReference type="InterPro" id="IPR011938">
    <property type="entry name" value="DNA_recomb/repair_RadA"/>
</dbReference>
<dbReference type="InterPro" id="IPR016467">
    <property type="entry name" value="DNA_recomb/repair_RecA-like"/>
</dbReference>
<dbReference type="InterPro" id="IPR010995">
    <property type="entry name" value="DNA_repair_Rad51/TF_NusA_a-hlx"/>
</dbReference>
<dbReference type="InterPro" id="IPR003583">
    <property type="entry name" value="Hlx-hairpin-Hlx_DNA-bd_motif"/>
</dbReference>
<dbReference type="InterPro" id="IPR027417">
    <property type="entry name" value="P-loop_NTPase"/>
</dbReference>
<dbReference type="InterPro" id="IPR020588">
    <property type="entry name" value="RecA_ATP-bd"/>
</dbReference>
<dbReference type="InterPro" id="IPR020587">
    <property type="entry name" value="RecA_monomer-monomer_interface"/>
</dbReference>
<dbReference type="NCBIfam" id="NF003301">
    <property type="entry name" value="PRK04301.1"/>
    <property type="match status" value="1"/>
</dbReference>
<dbReference type="NCBIfam" id="TIGR02236">
    <property type="entry name" value="recomb_radA"/>
    <property type="match status" value="1"/>
</dbReference>
<dbReference type="PANTHER" id="PTHR22942:SF30">
    <property type="entry name" value="MEIOTIC RECOMBINATION PROTEIN DMC1_LIM15 HOMOLOG"/>
    <property type="match status" value="1"/>
</dbReference>
<dbReference type="PANTHER" id="PTHR22942">
    <property type="entry name" value="RECA/RAD51/RADA DNA STRAND-PAIRING FAMILY MEMBER"/>
    <property type="match status" value="1"/>
</dbReference>
<dbReference type="Pfam" id="PF14520">
    <property type="entry name" value="HHH_5"/>
    <property type="match status" value="1"/>
</dbReference>
<dbReference type="Pfam" id="PF08423">
    <property type="entry name" value="Rad51"/>
    <property type="match status" value="1"/>
</dbReference>
<dbReference type="PIRSF" id="PIRSF005856">
    <property type="entry name" value="Rad51"/>
    <property type="match status" value="1"/>
</dbReference>
<dbReference type="SMART" id="SM00382">
    <property type="entry name" value="AAA"/>
    <property type="match status" value="1"/>
</dbReference>
<dbReference type="SMART" id="SM00278">
    <property type="entry name" value="HhH1"/>
    <property type="match status" value="2"/>
</dbReference>
<dbReference type="SUPFAM" id="SSF52540">
    <property type="entry name" value="P-loop containing nucleoside triphosphate hydrolases"/>
    <property type="match status" value="1"/>
</dbReference>
<dbReference type="SUPFAM" id="SSF47794">
    <property type="entry name" value="Rad51 N-terminal domain-like"/>
    <property type="match status" value="1"/>
</dbReference>
<dbReference type="PROSITE" id="PS50162">
    <property type="entry name" value="RECA_2"/>
    <property type="match status" value="1"/>
</dbReference>
<dbReference type="PROSITE" id="PS50163">
    <property type="entry name" value="RECA_3"/>
    <property type="match status" value="1"/>
</dbReference>
<reference key="1">
    <citation type="submission" date="2000-11" db="EMBL/GenBank/DDBJ databases">
        <title>Archaeal RecA homologs: different response to DNA damaging agents in mesophilic and thermophilic Archaea.</title>
        <authorList>
            <person name="Reich C.I."/>
            <person name="McNeil L.K."/>
            <person name="Brace J.L."/>
            <person name="Brucker J.K."/>
            <person name="Olsen G.J."/>
        </authorList>
    </citation>
    <scope>NUCLEOTIDE SEQUENCE [GENOMIC DNA]</scope>
    <source>
        <strain>ATCC 43000 / DSM 2067 / JCM 10722 / JJ</strain>
    </source>
</reference>
<comment type="function">
    <text evidence="1">Involved in DNA repair and in homologous recombination. Binds and assemble on single-stranded DNA to form a nucleoprotein filament. Hydrolyzes ATP in a ssDNA-dependent manner and promotes DNA strand exchange between homologous DNA molecules.</text>
</comment>
<comment type="similarity">
    <text evidence="1">Belongs to the eukaryotic RecA-like protein family.</text>
</comment>
<name>RADA_METMI</name>
<protein>
    <recommendedName>
        <fullName evidence="1">DNA repair and recombination protein RadA</fullName>
    </recommendedName>
</protein>
<evidence type="ECO:0000255" key="1">
    <source>
        <dbReference type="HAMAP-Rule" id="MF_00348"/>
    </source>
</evidence>
<evidence type="ECO:0007829" key="2">
    <source>
        <dbReference type="PDB" id="3EWA"/>
    </source>
</evidence>
<sequence length="322" mass="35106">MADVLTELPGVGPSTADKLIEGGYLDFMKIATATIGELTDIEGISEKAAAKMIMAARDLCDLGFKSGVELLKQRQSVWRLSTGSTELGTVLAGGIESQSVTEFAGMFGSGKTQIMHQTCVNLQMREKIFADLEGVVEEELEAPKAVYIDTEGTFRPERVVQMAEGAGIDGQTVLDNTFVARAYNSDMQMLFAEKIEDLIKGGNNIKLVIIDSLTSTFRNEFTGRGKLAERQQKLGRHMATLNKLADLYNCIVLVTNQVAAKPDAYFGVAEQAIGGHVVGHAATFRFFLRKSKGDKRVAKLYDSPHLPDSEAVFRITEKGIQD</sequence>
<accession>P0CW58</accession>
<accession>Q977P5</accession>
<gene>
    <name evidence="1" type="primary">radA</name>
</gene>
<organism>
    <name type="scientific">Methanococcus maripaludis</name>
    <name type="common">Methanococcus deltae</name>
    <dbReference type="NCBI Taxonomy" id="39152"/>
    <lineage>
        <taxon>Archaea</taxon>
        <taxon>Methanobacteriati</taxon>
        <taxon>Methanobacteriota</taxon>
        <taxon>Methanomada group</taxon>
        <taxon>Methanococci</taxon>
        <taxon>Methanococcales</taxon>
        <taxon>Methanococcaceae</taxon>
        <taxon>Methanococcus</taxon>
    </lineage>
</organism>
<feature type="chain" id="PRO_0000150097" description="DNA repair and recombination protein RadA">
    <location>
        <begin position="1"/>
        <end position="322"/>
    </location>
</feature>
<feature type="binding site" evidence="1">
    <location>
        <begin position="105"/>
        <end position="112"/>
    </location>
    <ligand>
        <name>ATP</name>
        <dbReference type="ChEBI" id="CHEBI:30616"/>
    </ligand>
</feature>
<feature type="helix" evidence="2">
    <location>
        <begin position="5"/>
        <end position="7"/>
    </location>
</feature>
<feature type="helix" evidence="2">
    <location>
        <begin position="13"/>
        <end position="21"/>
    </location>
</feature>
<feature type="helix" evidence="2">
    <location>
        <begin position="27"/>
        <end position="31"/>
    </location>
</feature>
<feature type="helix" evidence="2">
    <location>
        <begin position="35"/>
        <end position="39"/>
    </location>
</feature>
<feature type="helix" evidence="2">
    <location>
        <begin position="46"/>
        <end position="59"/>
    </location>
</feature>
<feature type="helix" evidence="2">
    <location>
        <begin position="68"/>
        <end position="74"/>
    </location>
</feature>
<feature type="helix" evidence="2">
    <location>
        <begin position="85"/>
        <end position="90"/>
    </location>
</feature>
<feature type="turn" evidence="2">
    <location>
        <begin position="91"/>
        <end position="93"/>
    </location>
</feature>
<feature type="strand" evidence="2">
    <location>
        <begin position="94"/>
        <end position="96"/>
    </location>
</feature>
<feature type="strand" evidence="2">
    <location>
        <begin position="99"/>
        <end position="106"/>
    </location>
</feature>
<feature type="helix" evidence="2">
    <location>
        <begin position="111"/>
        <end position="122"/>
    </location>
</feature>
<feature type="helix" evidence="2">
    <location>
        <begin position="125"/>
        <end position="127"/>
    </location>
</feature>
<feature type="turn" evidence="2">
    <location>
        <begin position="132"/>
        <end position="134"/>
    </location>
</feature>
<feature type="helix" evidence="2">
    <location>
        <begin position="137"/>
        <end position="139"/>
    </location>
</feature>
<feature type="strand" evidence="2">
    <location>
        <begin position="140"/>
        <end position="152"/>
    </location>
</feature>
<feature type="helix" evidence="2">
    <location>
        <begin position="156"/>
        <end position="166"/>
    </location>
</feature>
<feature type="helix" evidence="2">
    <location>
        <begin position="170"/>
        <end position="175"/>
    </location>
</feature>
<feature type="strand" evidence="2">
    <location>
        <begin position="177"/>
        <end position="181"/>
    </location>
</feature>
<feature type="helix" evidence="2">
    <location>
        <begin position="185"/>
        <end position="200"/>
    </location>
</feature>
<feature type="strand" evidence="2">
    <location>
        <begin position="204"/>
        <end position="214"/>
    </location>
</feature>
<feature type="helix" evidence="2">
    <location>
        <begin position="215"/>
        <end position="220"/>
    </location>
</feature>
<feature type="helix" evidence="2">
    <location>
        <begin position="224"/>
        <end position="226"/>
    </location>
</feature>
<feature type="helix" evidence="2">
    <location>
        <begin position="227"/>
        <end position="247"/>
    </location>
</feature>
<feature type="strand" evidence="2">
    <location>
        <begin position="251"/>
        <end position="256"/>
    </location>
</feature>
<feature type="strand" evidence="2">
    <location>
        <begin position="258"/>
        <end position="260"/>
    </location>
</feature>
<feature type="strand" evidence="2">
    <location>
        <begin position="270"/>
        <end position="274"/>
    </location>
</feature>
<feature type="helix" evidence="2">
    <location>
        <begin position="275"/>
        <end position="281"/>
    </location>
</feature>
<feature type="strand" evidence="2">
    <location>
        <begin position="283"/>
        <end position="290"/>
    </location>
</feature>
<feature type="strand" evidence="2">
    <location>
        <begin position="295"/>
        <end position="302"/>
    </location>
</feature>
<feature type="strand" evidence="2">
    <location>
        <begin position="304"/>
        <end position="306"/>
    </location>
</feature>
<feature type="strand" evidence="2">
    <location>
        <begin position="309"/>
        <end position="315"/>
    </location>
</feature>
<proteinExistence type="evidence at protein level"/>